<keyword id="KW-1003">Cell membrane</keyword>
<keyword id="KW-0297">G-protein coupled receptor</keyword>
<keyword id="KW-0325">Glycoprotein</keyword>
<keyword id="KW-0391">Immunity</keyword>
<keyword id="KW-0395">Inflammatory response</keyword>
<keyword id="KW-0446">Lipid-binding</keyword>
<keyword id="KW-0472">Membrane</keyword>
<keyword id="KW-0675">Receptor</keyword>
<keyword id="KW-1185">Reference proteome</keyword>
<keyword id="KW-0807">Transducer</keyword>
<keyword id="KW-0812">Transmembrane</keyword>
<keyword id="KW-1133">Transmembrane helix</keyword>
<proteinExistence type="evidence at protein level"/>
<organism>
    <name type="scientific">Rattus norvegicus</name>
    <name type="common">Rat</name>
    <dbReference type="NCBI Taxonomy" id="10116"/>
    <lineage>
        <taxon>Eukaryota</taxon>
        <taxon>Metazoa</taxon>
        <taxon>Chordata</taxon>
        <taxon>Craniata</taxon>
        <taxon>Vertebrata</taxon>
        <taxon>Euteleostomi</taxon>
        <taxon>Mammalia</taxon>
        <taxon>Eutheria</taxon>
        <taxon>Euarchontoglires</taxon>
        <taxon>Glires</taxon>
        <taxon>Rodentia</taxon>
        <taxon>Myomorpha</taxon>
        <taxon>Muroidea</taxon>
        <taxon>Muridae</taxon>
        <taxon>Murinae</taxon>
        <taxon>Rattus</taxon>
    </lineage>
</organism>
<dbReference type="EMBL" id="AB106675">
    <property type="protein sequence ID" value="BAD02826.1"/>
    <property type="molecule type" value="mRNA"/>
</dbReference>
<dbReference type="RefSeq" id="NP_001005877.1">
    <property type="nucleotide sequence ID" value="NM_001005877.3"/>
</dbReference>
<dbReference type="RefSeq" id="XP_006228884.1">
    <property type="nucleotide sequence ID" value="XM_006228822.3"/>
</dbReference>
<dbReference type="RefSeq" id="XP_008757355.1">
    <property type="nucleotide sequence ID" value="XM_008759133.4"/>
</dbReference>
<dbReference type="RefSeq" id="XP_008757356.1">
    <property type="nucleotide sequence ID" value="XM_008759134.4"/>
</dbReference>
<dbReference type="RefSeq" id="XP_008757357.1">
    <property type="nucleotide sequence ID" value="XM_008759135.3"/>
</dbReference>
<dbReference type="RefSeq" id="XP_017444402.1">
    <property type="nucleotide sequence ID" value="XM_017588913.1"/>
</dbReference>
<dbReference type="RefSeq" id="XP_038960454.1">
    <property type="nucleotide sequence ID" value="XM_039104526.2"/>
</dbReference>
<dbReference type="SMR" id="Q76EI6"/>
<dbReference type="FunCoup" id="Q76EI6">
    <property type="interactions" value="36"/>
</dbReference>
<dbReference type="STRING" id="10116.ENSRNOP00000028532"/>
<dbReference type="BindingDB" id="Q76EI6"/>
<dbReference type="ChEMBL" id="CHEMBL3309100"/>
<dbReference type="GuidetoPHARMACOLOGY" id="226"/>
<dbReference type="GlyCosmos" id="Q76EI6">
    <property type="glycosylation" value="2 sites, No reported glycans"/>
</dbReference>
<dbReference type="GlyGen" id="Q76EI6">
    <property type="glycosylation" value="2 sites"/>
</dbReference>
<dbReference type="PhosphoSitePlus" id="Q76EI6"/>
<dbReference type="PaxDb" id="10116-ENSRNOP00000028532"/>
<dbReference type="Ensembl" id="ENSRNOT00000028532.3">
    <property type="protein sequence ID" value="ENSRNOP00000028532.1"/>
    <property type="gene ID" value="ENSRNOG00000021021.3"/>
</dbReference>
<dbReference type="Ensembl" id="ENSRNOT00000110584.1">
    <property type="protein sequence ID" value="ENSRNOP00000092741.1"/>
    <property type="gene ID" value="ENSRNOG00000021021.3"/>
</dbReference>
<dbReference type="Ensembl" id="ENSRNOT00000111135.1">
    <property type="protein sequence ID" value="ENSRNOP00000076649.1"/>
    <property type="gene ID" value="ENSRNOG00000021021.3"/>
</dbReference>
<dbReference type="GeneID" id="292794"/>
<dbReference type="KEGG" id="rno:292794"/>
<dbReference type="UCSC" id="RGD:1359614">
    <property type="organism name" value="rat"/>
</dbReference>
<dbReference type="AGR" id="RGD:1359614"/>
<dbReference type="CTD" id="2867"/>
<dbReference type="RGD" id="1359614">
    <property type="gene designation" value="Ffar2"/>
</dbReference>
<dbReference type="eggNOG" id="ENOG502QQGM">
    <property type="taxonomic scope" value="Eukaryota"/>
</dbReference>
<dbReference type="GeneTree" id="ENSGT00990000203527"/>
<dbReference type="HOGENOM" id="CLU_009579_8_4_1"/>
<dbReference type="InParanoid" id="Q76EI6"/>
<dbReference type="OMA" id="ITIFCYW"/>
<dbReference type="OrthoDB" id="5961208at2759"/>
<dbReference type="PhylomeDB" id="Q76EI6"/>
<dbReference type="TreeFam" id="TF350010"/>
<dbReference type="Reactome" id="R-RNO-416476">
    <property type="pathway name" value="G alpha (q) signalling events"/>
</dbReference>
<dbReference type="Reactome" id="R-RNO-444209">
    <property type="pathway name" value="Free fatty acid receptors"/>
</dbReference>
<dbReference type="PRO" id="PR:Q76EI6"/>
<dbReference type="Proteomes" id="UP000002494">
    <property type="component" value="Chromosome 1"/>
</dbReference>
<dbReference type="Bgee" id="ENSRNOG00000021021">
    <property type="expression patterns" value="Expressed in colon and 10 other cell types or tissues"/>
</dbReference>
<dbReference type="GO" id="GO:0042995">
    <property type="term" value="C:cell projection"/>
    <property type="evidence" value="ECO:0000314"/>
    <property type="project" value="RGD"/>
</dbReference>
<dbReference type="GO" id="GO:0005886">
    <property type="term" value="C:plasma membrane"/>
    <property type="evidence" value="ECO:0000250"/>
    <property type="project" value="UniProtKB"/>
</dbReference>
<dbReference type="GO" id="GO:0004930">
    <property type="term" value="F:G protein-coupled receptor activity"/>
    <property type="evidence" value="ECO:0000314"/>
    <property type="project" value="UniProtKB"/>
</dbReference>
<dbReference type="GO" id="GO:0008289">
    <property type="term" value="F:lipid binding"/>
    <property type="evidence" value="ECO:0007669"/>
    <property type="project" value="UniProtKB-KW"/>
</dbReference>
<dbReference type="GO" id="GO:0002752">
    <property type="term" value="P:cell surface pattern recognition receptor signaling pathway"/>
    <property type="evidence" value="ECO:0000250"/>
    <property type="project" value="UniProtKB"/>
</dbReference>
<dbReference type="GO" id="GO:0071398">
    <property type="term" value="P:cellular response to fatty acid"/>
    <property type="evidence" value="ECO:0000314"/>
    <property type="project" value="UniProtKB"/>
</dbReference>
<dbReference type="GO" id="GO:0045444">
    <property type="term" value="P:fat cell differentiation"/>
    <property type="evidence" value="ECO:0000250"/>
    <property type="project" value="UniProtKB"/>
</dbReference>
<dbReference type="GO" id="GO:0007186">
    <property type="term" value="P:G protein-coupled receptor signaling pathway"/>
    <property type="evidence" value="ECO:0000314"/>
    <property type="project" value="UniProtKB"/>
</dbReference>
<dbReference type="GO" id="GO:0042593">
    <property type="term" value="P:glucose homeostasis"/>
    <property type="evidence" value="ECO:0000250"/>
    <property type="project" value="UniProtKB"/>
</dbReference>
<dbReference type="GO" id="GO:0002232">
    <property type="term" value="P:leukocyte chemotaxis involved in inflammatory response"/>
    <property type="evidence" value="ECO:0000250"/>
    <property type="project" value="UniProtKB"/>
</dbReference>
<dbReference type="GO" id="GO:1990806">
    <property type="term" value="P:ligand-gated ion channel signaling pathway"/>
    <property type="evidence" value="ECO:0000266"/>
    <property type="project" value="RGD"/>
</dbReference>
<dbReference type="GO" id="GO:0019915">
    <property type="term" value="P:lipid storage"/>
    <property type="evidence" value="ECO:0000250"/>
    <property type="project" value="UniProtKB"/>
</dbReference>
<dbReference type="GO" id="GO:0002385">
    <property type="term" value="P:mucosal immune response"/>
    <property type="evidence" value="ECO:0000250"/>
    <property type="project" value="UniProtKB"/>
</dbReference>
<dbReference type="GO" id="GO:0046676">
    <property type="term" value="P:negative regulation of insulin secretion"/>
    <property type="evidence" value="ECO:0000266"/>
    <property type="project" value="RGD"/>
</dbReference>
<dbReference type="GO" id="GO:0007200">
    <property type="term" value="P:phospholipase C-activating G protein-coupled receptor signaling pathway"/>
    <property type="evidence" value="ECO:0000266"/>
    <property type="project" value="RGD"/>
</dbReference>
<dbReference type="GO" id="GO:0002879">
    <property type="term" value="P:positive regulation of acute inflammatory response to non-antigenic stimulus"/>
    <property type="evidence" value="ECO:0000250"/>
    <property type="project" value="UniProtKB"/>
</dbReference>
<dbReference type="GO" id="GO:0032722">
    <property type="term" value="P:positive regulation of chemokine production"/>
    <property type="evidence" value="ECO:0000250"/>
    <property type="project" value="UniProtKB"/>
</dbReference>
<dbReference type="GO" id="GO:0002720">
    <property type="term" value="P:positive regulation of cytokine production involved in immune response"/>
    <property type="evidence" value="ECO:0000250"/>
    <property type="project" value="UniProtKB"/>
</dbReference>
<dbReference type="GO" id="GO:0032024">
    <property type="term" value="P:positive regulation of insulin secretion"/>
    <property type="evidence" value="ECO:0000266"/>
    <property type="project" value="RGD"/>
</dbReference>
<dbReference type="GO" id="GO:0032757">
    <property type="term" value="P:positive regulation of interleukin-8 production"/>
    <property type="evidence" value="ECO:0000250"/>
    <property type="project" value="UniProtKB"/>
</dbReference>
<dbReference type="GO" id="GO:0002673">
    <property type="term" value="P:regulation of acute inflammatory response"/>
    <property type="evidence" value="ECO:0000250"/>
    <property type="project" value="UniProtKB"/>
</dbReference>
<dbReference type="GO" id="GO:0090276">
    <property type="term" value="P:regulation of peptide hormone secretion"/>
    <property type="evidence" value="ECO:0000250"/>
    <property type="project" value="UniProtKB"/>
</dbReference>
<dbReference type="CDD" id="cd15170">
    <property type="entry name" value="7tmA_FFAR2_FFAR3"/>
    <property type="match status" value="1"/>
</dbReference>
<dbReference type="FunFam" id="1.20.1070.10:FF:000173">
    <property type="entry name" value="Free fatty acid receptor 1"/>
    <property type="match status" value="1"/>
</dbReference>
<dbReference type="Gene3D" id="1.20.1070.10">
    <property type="entry name" value="Rhodopsin 7-helix transmembrane proteins"/>
    <property type="match status" value="1"/>
</dbReference>
<dbReference type="InterPro" id="IPR000276">
    <property type="entry name" value="GPCR_Rhodpsn"/>
</dbReference>
<dbReference type="InterPro" id="IPR017452">
    <property type="entry name" value="GPCR_Rhodpsn_7TM"/>
</dbReference>
<dbReference type="InterPro" id="IPR013312">
    <property type="entry name" value="GPR40-rel_orph"/>
</dbReference>
<dbReference type="PANTHER" id="PTHR45822:SF5">
    <property type="entry name" value="FREE FATTY ACID RECEPTOR 2"/>
    <property type="match status" value="1"/>
</dbReference>
<dbReference type="PANTHER" id="PTHR45822">
    <property type="entry name" value="FREE FATTY ACID RECEPTOR 2-RELATED"/>
    <property type="match status" value="1"/>
</dbReference>
<dbReference type="Pfam" id="PF00001">
    <property type="entry name" value="7tm_1"/>
    <property type="match status" value="1"/>
</dbReference>
<dbReference type="PRINTS" id="PR00237">
    <property type="entry name" value="GPCRRHODOPSN"/>
</dbReference>
<dbReference type="PRINTS" id="PR01904">
    <property type="entry name" value="GPR40FAMILY"/>
</dbReference>
<dbReference type="SUPFAM" id="SSF81321">
    <property type="entry name" value="Family A G protein-coupled receptor-like"/>
    <property type="match status" value="1"/>
</dbReference>
<dbReference type="PROSITE" id="PS00237">
    <property type="entry name" value="G_PROTEIN_RECEP_F1_1"/>
    <property type="match status" value="1"/>
</dbReference>
<dbReference type="PROSITE" id="PS50262">
    <property type="entry name" value="G_PROTEIN_RECEP_F1_2"/>
    <property type="match status" value="1"/>
</dbReference>
<evidence type="ECO:0000250" key="1"/>
<evidence type="ECO:0000255" key="2"/>
<evidence type="ECO:0000255" key="3">
    <source>
        <dbReference type="PROSITE-ProRule" id="PRU00521"/>
    </source>
</evidence>
<evidence type="ECO:0000256" key="4">
    <source>
        <dbReference type="SAM" id="MobiDB-lite"/>
    </source>
</evidence>
<evidence type="ECO:0000269" key="5">
    <source>
    </source>
</evidence>
<evidence type="ECO:0000269" key="6">
    <source>
    </source>
</evidence>
<evidence type="ECO:0000305" key="7"/>
<reference key="1">
    <citation type="submission" date="2003-03" db="EMBL/GenBank/DDBJ databases">
        <title>Search for ligands of GPR43 and analysis for its mRNA expression.</title>
        <authorList>
            <person name="Tanaka H."/>
            <person name="Shinohara T."/>
            <person name="Ogi K."/>
            <person name="Hosoya M."/>
            <person name="Fukusumi S."/>
            <person name="Noguchi Y."/>
            <person name="Tanaka Y."/>
            <person name="Kizawa H."/>
            <person name="Fujii R."/>
            <person name="Itoh Y."/>
            <person name="Hinuma S."/>
            <person name="Fujisawa F."/>
            <person name="Fujino M."/>
        </authorList>
    </citation>
    <scope>NUCLEOTIDE SEQUENCE [MRNA]</scope>
</reference>
<reference key="2">
    <citation type="journal article" date="2006" name="Cell Tissue Res.">
        <title>Short-chain fatty acid receptor, GPR43, is expressed by enteroendocrine cells and mucosal mast cells in rat intestine.</title>
        <authorList>
            <person name="Karaki S."/>
            <person name="Mitsui R."/>
            <person name="Hayashi H."/>
            <person name="Kato I."/>
            <person name="Sugiya H."/>
            <person name="Iwanaga T."/>
            <person name="Furness J.B."/>
            <person name="Kuwahara A."/>
        </authorList>
    </citation>
    <scope>TISSUE SPECIFICITY</scope>
</reference>
<reference key="3">
    <citation type="journal article" date="2013" name="J. Biol. Chem.">
        <title>Defining the molecular basis for the first potent and selective orthosteric agonists of the FFA2 free fatty acid receptor.</title>
        <authorList>
            <person name="Hudson B.D."/>
            <person name="Due-Hansen M.E."/>
            <person name="Christiansen E."/>
            <person name="Hansen A.M."/>
            <person name="Mackenzie A.E."/>
            <person name="Murdoch H."/>
            <person name="Pandey S.K."/>
            <person name="Ward R.J."/>
            <person name="Marquez R."/>
            <person name="Tikhonova I.G."/>
            <person name="Ulven T."/>
            <person name="Milligan G."/>
        </authorList>
    </citation>
    <scope>FUNCTION</scope>
</reference>
<comment type="function">
    <text evidence="6">G protein-coupled receptor that is activated by a major product of dietary fiber digestion, the short chain fatty acids (SCFAs), and that plays a role in the regulation of whole-body energy homeostasis and in intestinal immunity. In omnivorous mammals, the short chain fatty acids acetate, propionate and butyrate are produced primarily by the gut microbiome that metabolizes dietary fibers. SCFAs serve as a source of energy but also act as signaling molecules. That G protein-coupled receptor is probably coupled to the pertussis toxin-sensitive, G(i/o)-alpha family of G proteins but also to the Gq family (PubMed:23589301). Its activation results in the formation of inositol 1,4,5-trisphosphate, the mobilization of intracellular calcium, the phosphorylation of the MAPK3/ERK1 and MAPK1/ERK2 kinases and the inhibition of intracellular cAMP accumulation. May play a role in glucose homeostasis by regulating the secretion of GLP-1, in response to short-chain fatty acids accumulating in the intestine. May also regulate the production of LEP/Leptin, a hormone acting on the central nervous system to inhibit food intake. Finally, may also regulate whole-body energy homeostasis through adipogenesis regulating both differentiation and lipid storage of adipocytes. In parallel to its role in energy homeostasis, may also mediate the activation of the inflammatory and immune responses by SCFA in the intestine, regulating the rapid production of chemokines and cytokines. May also play a role in the resolution of the inflammatory response and control chemotaxis in neutrophils. In addition to SCFAs, may also be activated by the extracellular lectin FCN1 in a process leading to activation of monocytes and inducing the secretion of interleukin-8/IL-8 in response to the presence of microbes.</text>
</comment>
<comment type="subunit">
    <text evidence="1">Interacts with FCN1 (via Fibrinogen C-terminal domain).</text>
</comment>
<comment type="subcellular location">
    <subcellularLocation>
        <location evidence="7">Cell membrane</location>
        <topology evidence="7">Multi-pass membrane protein</topology>
    </subcellularLocation>
</comment>
<comment type="tissue specificity">
    <text evidence="5">Detected in whole wall and separated mucosa in the distal ileum and colon. Expressed by enteroendocrine cells expressing peptide YY (PYY) (at protein level).</text>
</comment>
<comment type="similarity">
    <text evidence="3">Belongs to the G-protein coupled receptor 1 family.</text>
</comment>
<gene>
    <name type="primary">Ffar2</name>
    <name type="synonym">Gpr43</name>
</gene>
<accession>Q76EI6</accession>
<feature type="chain" id="PRO_0000228145" description="Free fatty acid receptor 2">
    <location>
        <begin position="1"/>
        <end position="330"/>
    </location>
</feature>
<feature type="topological domain" description="Extracellular" evidence="2">
    <location>
        <begin position="1"/>
        <end position="8"/>
    </location>
</feature>
<feature type="transmembrane region" description="Helical; Name=1" evidence="2">
    <location>
        <begin position="9"/>
        <end position="29"/>
    </location>
</feature>
<feature type="topological domain" description="Cytoplasmic" evidence="2">
    <location>
        <begin position="30"/>
        <end position="43"/>
    </location>
</feature>
<feature type="transmembrane region" description="Helical; Name=2" evidence="2">
    <location>
        <begin position="44"/>
        <end position="64"/>
    </location>
</feature>
<feature type="topological domain" description="Extracellular" evidence="2">
    <location>
        <begin position="65"/>
        <end position="79"/>
    </location>
</feature>
<feature type="transmembrane region" description="Helical; Name=3" evidence="2">
    <location>
        <begin position="80"/>
        <end position="100"/>
    </location>
</feature>
<feature type="topological domain" description="Cytoplasmic" evidence="2">
    <location>
        <begin position="101"/>
        <end position="126"/>
    </location>
</feature>
<feature type="transmembrane region" description="Helical; Name=4" evidence="2">
    <location>
        <begin position="127"/>
        <end position="147"/>
    </location>
</feature>
<feature type="topological domain" description="Extracellular" evidence="2">
    <location>
        <begin position="148"/>
        <end position="184"/>
    </location>
</feature>
<feature type="transmembrane region" description="Helical; Name=5" evidence="2">
    <location>
        <begin position="185"/>
        <end position="205"/>
    </location>
</feature>
<feature type="topological domain" description="Cytoplasmic" evidence="2">
    <location>
        <begin position="206"/>
        <end position="219"/>
    </location>
</feature>
<feature type="transmembrane region" description="Helical; Name=6" evidence="2">
    <location>
        <begin position="220"/>
        <end position="240"/>
    </location>
</feature>
<feature type="topological domain" description="Extracellular" evidence="2">
    <location>
        <begin position="241"/>
        <end position="255"/>
    </location>
</feature>
<feature type="transmembrane region" description="Helical; Name=7" evidence="2">
    <location>
        <begin position="256"/>
        <end position="276"/>
    </location>
</feature>
<feature type="topological domain" description="Cytoplasmic" evidence="2">
    <location>
        <begin position="277"/>
        <end position="330"/>
    </location>
</feature>
<feature type="region of interest" description="Disordered" evidence="4">
    <location>
        <begin position="300"/>
        <end position="330"/>
    </location>
</feature>
<feature type="compositionally biased region" description="Basic and acidic residues" evidence="4">
    <location>
        <begin position="302"/>
        <end position="314"/>
    </location>
</feature>
<feature type="compositionally biased region" description="Polar residues" evidence="4">
    <location>
        <begin position="315"/>
        <end position="330"/>
    </location>
</feature>
<feature type="glycosylation site" description="N-linked (GlcNAc...) asparagine" evidence="2">
    <location>
        <position position="151"/>
    </location>
</feature>
<feature type="glycosylation site" description="N-linked (GlcNAc...) asparagine" evidence="2">
    <location>
        <position position="167"/>
    </location>
</feature>
<sequence>MTPDWHSSLILTAYILIFLTGLPANLLALRAFVSRVRQPQPAPVHILLLNLTLADLLLLLLLPFRIVEAASNFRWYLPKIVCALTGFGFYSSIYCSTWLLAGISIERYLGVAFPVQYKLSRRPLYGVIAALVAWIMSFGHCTIVIIVQYLNSTEQVGTENQITCYENFTQAQLDVVLPVRLELCLVLFFVPMTVTIFCYWRFVWIMLTQPHVGAQRRRRAVGLAVVTLLNFLVCFGPYNMSHLVGFHLRQSPSWRVEAVVFSSLNASLDPLLFYFSSSVVRRAFGKGLLLLRNPGSSMLGRGAEETVEGTKTDRGGSQTEGAQSSDFVTE</sequence>
<protein>
    <recommendedName>
        <fullName>Free fatty acid receptor 2</fullName>
    </recommendedName>
    <alternativeName>
        <fullName>G-protein coupled receptor 43</fullName>
    </alternativeName>
</protein>
<name>FFAR2_RAT</name>